<name>RL33_ANADF</name>
<keyword id="KW-1185">Reference proteome</keyword>
<keyword id="KW-0687">Ribonucleoprotein</keyword>
<keyword id="KW-0689">Ribosomal protein</keyword>
<gene>
    <name evidence="1" type="primary">rpmG</name>
    <name type="ordered locus">Anae109_2228</name>
</gene>
<organism>
    <name type="scientific">Anaeromyxobacter sp. (strain Fw109-5)</name>
    <dbReference type="NCBI Taxonomy" id="404589"/>
    <lineage>
        <taxon>Bacteria</taxon>
        <taxon>Pseudomonadati</taxon>
        <taxon>Myxococcota</taxon>
        <taxon>Myxococcia</taxon>
        <taxon>Myxococcales</taxon>
        <taxon>Cystobacterineae</taxon>
        <taxon>Anaeromyxobacteraceae</taxon>
        <taxon>Anaeromyxobacter</taxon>
    </lineage>
</organism>
<feature type="chain" id="PRO_0000356374" description="Large ribosomal subunit protein bL33">
    <location>
        <begin position="1"/>
        <end position="52"/>
    </location>
</feature>
<reference key="1">
    <citation type="journal article" date="2015" name="Genome Announc.">
        <title>Complete genome sequence of Anaeromyxobacter sp. Fw109-5, an anaerobic, metal-reducing bacterium isolated from a contaminated subsurface environment.</title>
        <authorList>
            <person name="Hwang C."/>
            <person name="Copeland A."/>
            <person name="Lucas S."/>
            <person name="Lapidus A."/>
            <person name="Barry K."/>
            <person name="Glavina Del Rio T."/>
            <person name="Dalin E."/>
            <person name="Tice H."/>
            <person name="Pitluck S."/>
            <person name="Sims D."/>
            <person name="Brettin T."/>
            <person name="Bruce D.C."/>
            <person name="Detter J.C."/>
            <person name="Han C.S."/>
            <person name="Schmutz J."/>
            <person name="Larimer F.W."/>
            <person name="Land M.L."/>
            <person name="Hauser L.J."/>
            <person name="Kyrpides N."/>
            <person name="Lykidis A."/>
            <person name="Richardson P."/>
            <person name="Belieav A."/>
            <person name="Sanford R.A."/>
            <person name="Loeffler F.E."/>
            <person name="Fields M.W."/>
        </authorList>
    </citation>
    <scope>NUCLEOTIDE SEQUENCE [LARGE SCALE GENOMIC DNA]</scope>
    <source>
        <strain>Fw109-5</strain>
    </source>
</reference>
<sequence length="52" mass="6112">MAGNRSIITLECKTCKERNYTTTKNKKKTQDKLALSKFCPRCRKHVDHKETK</sequence>
<comment type="similarity">
    <text evidence="1">Belongs to the bacterial ribosomal protein bL33 family.</text>
</comment>
<dbReference type="EMBL" id="CP000769">
    <property type="protein sequence ID" value="ABS26430.1"/>
    <property type="molecule type" value="Genomic_DNA"/>
</dbReference>
<dbReference type="RefSeq" id="WP_012097012.1">
    <property type="nucleotide sequence ID" value="NC_009675.1"/>
</dbReference>
<dbReference type="SMR" id="A7HCI4"/>
<dbReference type="STRING" id="404589.Anae109_2228"/>
<dbReference type="KEGG" id="afw:Anae109_2228"/>
<dbReference type="eggNOG" id="COG0267">
    <property type="taxonomic scope" value="Bacteria"/>
</dbReference>
<dbReference type="HOGENOM" id="CLU_190949_0_2_7"/>
<dbReference type="Proteomes" id="UP000006382">
    <property type="component" value="Chromosome"/>
</dbReference>
<dbReference type="GO" id="GO:0005737">
    <property type="term" value="C:cytoplasm"/>
    <property type="evidence" value="ECO:0007669"/>
    <property type="project" value="UniProtKB-ARBA"/>
</dbReference>
<dbReference type="GO" id="GO:1990904">
    <property type="term" value="C:ribonucleoprotein complex"/>
    <property type="evidence" value="ECO:0007669"/>
    <property type="project" value="UniProtKB-KW"/>
</dbReference>
<dbReference type="GO" id="GO:0005840">
    <property type="term" value="C:ribosome"/>
    <property type="evidence" value="ECO:0007669"/>
    <property type="project" value="UniProtKB-KW"/>
</dbReference>
<dbReference type="GO" id="GO:0003735">
    <property type="term" value="F:structural constituent of ribosome"/>
    <property type="evidence" value="ECO:0007669"/>
    <property type="project" value="InterPro"/>
</dbReference>
<dbReference type="GO" id="GO:0006412">
    <property type="term" value="P:translation"/>
    <property type="evidence" value="ECO:0007669"/>
    <property type="project" value="UniProtKB-UniRule"/>
</dbReference>
<dbReference type="Gene3D" id="2.20.28.120">
    <property type="entry name" value="Ribosomal protein L33"/>
    <property type="match status" value="1"/>
</dbReference>
<dbReference type="HAMAP" id="MF_00294">
    <property type="entry name" value="Ribosomal_bL33"/>
    <property type="match status" value="1"/>
</dbReference>
<dbReference type="InterPro" id="IPR001705">
    <property type="entry name" value="Ribosomal_bL33"/>
</dbReference>
<dbReference type="InterPro" id="IPR018264">
    <property type="entry name" value="Ribosomal_bL33_CS"/>
</dbReference>
<dbReference type="InterPro" id="IPR038584">
    <property type="entry name" value="Ribosomal_bL33_sf"/>
</dbReference>
<dbReference type="InterPro" id="IPR011332">
    <property type="entry name" value="Ribosomal_zn-bd"/>
</dbReference>
<dbReference type="NCBIfam" id="NF001764">
    <property type="entry name" value="PRK00504.1"/>
    <property type="match status" value="1"/>
</dbReference>
<dbReference type="NCBIfam" id="NF001860">
    <property type="entry name" value="PRK00595.1"/>
    <property type="match status" value="1"/>
</dbReference>
<dbReference type="NCBIfam" id="TIGR01023">
    <property type="entry name" value="rpmG_bact"/>
    <property type="match status" value="1"/>
</dbReference>
<dbReference type="PANTHER" id="PTHR43168">
    <property type="entry name" value="50S RIBOSOMAL PROTEIN L33, CHLOROPLASTIC"/>
    <property type="match status" value="1"/>
</dbReference>
<dbReference type="PANTHER" id="PTHR43168:SF2">
    <property type="entry name" value="LARGE RIBOSOMAL SUBUNIT PROTEIN BL33C"/>
    <property type="match status" value="1"/>
</dbReference>
<dbReference type="Pfam" id="PF00471">
    <property type="entry name" value="Ribosomal_L33"/>
    <property type="match status" value="1"/>
</dbReference>
<dbReference type="SUPFAM" id="SSF57829">
    <property type="entry name" value="Zn-binding ribosomal proteins"/>
    <property type="match status" value="1"/>
</dbReference>
<dbReference type="PROSITE" id="PS00582">
    <property type="entry name" value="RIBOSOMAL_L33"/>
    <property type="match status" value="1"/>
</dbReference>
<proteinExistence type="inferred from homology"/>
<accession>A7HCI4</accession>
<evidence type="ECO:0000255" key="1">
    <source>
        <dbReference type="HAMAP-Rule" id="MF_00294"/>
    </source>
</evidence>
<evidence type="ECO:0000305" key="2"/>
<protein>
    <recommendedName>
        <fullName evidence="1">Large ribosomal subunit protein bL33</fullName>
    </recommendedName>
    <alternativeName>
        <fullName evidence="2">50S ribosomal protein L33</fullName>
    </alternativeName>
</protein>